<comment type="function">
    <text evidence="1">Negative regulator of class I heat shock genes (grpE-dnaK-dnaJ and groELS operons). Prevents heat-shock induction of these operons.</text>
</comment>
<comment type="induction">
    <text>By heat shock.</text>
</comment>
<comment type="similarity">
    <text evidence="1">Belongs to the HrcA family.</text>
</comment>
<feature type="chain" id="PRO_0000182471" description="Heat-inducible transcription repressor HrcA">
    <location>
        <begin position="1"/>
        <end position="343"/>
    </location>
</feature>
<sequence length="343" mass="38876">MEMEERKLKILQAIINDYINNGEPVGSRTIAKKYNLGISSATIRNEMADLEEMGYIEQLHTSSGRKPSDKGYRLYVDRLMEIPSMSVEEEMLIKAKIIDSALYEIDKLVKQAMSLVSEMTKLTCVVKSLSARKSYIKSISLINIEPNMILCVFITDSGMIKNSIIRVKSNIENSSLERIANILNSKLKGLTIEQINLEVINNIKKDLREYGHIFDCIMPNLYDILREADSTEVYKEGTMNIFNYPEFKDIEKAKEFLSVIDDRRILDTLFNASGGVTVNIGNENSIKEARDFSVVSSVYKYNGRPLGTIGIIGPTRIPYSKVIKVIMEVVDQINNNLDKMNNS</sequence>
<evidence type="ECO:0000255" key="1">
    <source>
        <dbReference type="HAMAP-Rule" id="MF_00081"/>
    </source>
</evidence>
<dbReference type="EMBL" id="M74569">
    <property type="protein sequence ID" value="AAA23244.1"/>
    <property type="molecule type" value="Genomic_DNA"/>
</dbReference>
<dbReference type="EMBL" id="AE001437">
    <property type="protein sequence ID" value="AAK79251.1"/>
    <property type="molecule type" value="Genomic_DNA"/>
</dbReference>
<dbReference type="PIR" id="D41873">
    <property type="entry name" value="D41873"/>
</dbReference>
<dbReference type="PIR" id="H97057">
    <property type="entry name" value="H97057"/>
</dbReference>
<dbReference type="RefSeq" id="NP_347911.1">
    <property type="nucleotide sequence ID" value="NC_003030.1"/>
</dbReference>
<dbReference type="RefSeq" id="WP_010964592.1">
    <property type="nucleotide sequence ID" value="NC_003030.1"/>
</dbReference>
<dbReference type="SMR" id="P30727"/>
<dbReference type="STRING" id="272562.CA_C1280"/>
<dbReference type="DNASU" id="1117463"/>
<dbReference type="GeneID" id="44997786"/>
<dbReference type="KEGG" id="cac:CA_C1280"/>
<dbReference type="PATRIC" id="fig|272562.8.peg.1481"/>
<dbReference type="eggNOG" id="COG1420">
    <property type="taxonomic scope" value="Bacteria"/>
</dbReference>
<dbReference type="HOGENOM" id="CLU_050019_1_0_9"/>
<dbReference type="OrthoDB" id="9783139at2"/>
<dbReference type="Proteomes" id="UP000000814">
    <property type="component" value="Chromosome"/>
</dbReference>
<dbReference type="GO" id="GO:0003677">
    <property type="term" value="F:DNA binding"/>
    <property type="evidence" value="ECO:0007669"/>
    <property type="project" value="InterPro"/>
</dbReference>
<dbReference type="GO" id="GO:0045892">
    <property type="term" value="P:negative regulation of DNA-templated transcription"/>
    <property type="evidence" value="ECO:0007669"/>
    <property type="project" value="UniProtKB-UniRule"/>
</dbReference>
<dbReference type="FunFam" id="1.10.10.10:FF:000049">
    <property type="entry name" value="Heat-inducible transcription repressor HrcA"/>
    <property type="match status" value="1"/>
</dbReference>
<dbReference type="Gene3D" id="3.30.450.40">
    <property type="match status" value="1"/>
</dbReference>
<dbReference type="Gene3D" id="3.30.390.60">
    <property type="entry name" value="Heat-inducible transcription repressor hrca homolog, domain 3"/>
    <property type="match status" value="1"/>
</dbReference>
<dbReference type="Gene3D" id="1.10.10.10">
    <property type="entry name" value="Winged helix-like DNA-binding domain superfamily/Winged helix DNA-binding domain"/>
    <property type="match status" value="1"/>
</dbReference>
<dbReference type="HAMAP" id="MF_00081">
    <property type="entry name" value="HrcA"/>
    <property type="match status" value="1"/>
</dbReference>
<dbReference type="InterPro" id="IPR029016">
    <property type="entry name" value="GAF-like_dom_sf"/>
</dbReference>
<dbReference type="InterPro" id="IPR002571">
    <property type="entry name" value="HrcA"/>
</dbReference>
<dbReference type="InterPro" id="IPR021153">
    <property type="entry name" value="HrcA_C"/>
</dbReference>
<dbReference type="InterPro" id="IPR036388">
    <property type="entry name" value="WH-like_DNA-bd_sf"/>
</dbReference>
<dbReference type="InterPro" id="IPR036390">
    <property type="entry name" value="WH_DNA-bd_sf"/>
</dbReference>
<dbReference type="InterPro" id="IPR005104">
    <property type="entry name" value="WHTH_HrcA_DNA-bd"/>
</dbReference>
<dbReference type="InterPro" id="IPR023120">
    <property type="entry name" value="WHTH_transcript_rep_HrcA_IDD"/>
</dbReference>
<dbReference type="NCBIfam" id="TIGR00331">
    <property type="entry name" value="hrcA"/>
    <property type="match status" value="1"/>
</dbReference>
<dbReference type="PANTHER" id="PTHR34824">
    <property type="entry name" value="HEAT-INDUCIBLE TRANSCRIPTION REPRESSOR HRCA"/>
    <property type="match status" value="1"/>
</dbReference>
<dbReference type="PANTHER" id="PTHR34824:SF1">
    <property type="entry name" value="HEAT-INDUCIBLE TRANSCRIPTION REPRESSOR HRCA"/>
    <property type="match status" value="1"/>
</dbReference>
<dbReference type="Pfam" id="PF01628">
    <property type="entry name" value="HrcA"/>
    <property type="match status" value="1"/>
</dbReference>
<dbReference type="Pfam" id="PF03444">
    <property type="entry name" value="HrcA_DNA-bdg"/>
    <property type="match status" value="1"/>
</dbReference>
<dbReference type="PIRSF" id="PIRSF005485">
    <property type="entry name" value="HrcA"/>
    <property type="match status" value="1"/>
</dbReference>
<dbReference type="SUPFAM" id="SSF55781">
    <property type="entry name" value="GAF domain-like"/>
    <property type="match status" value="1"/>
</dbReference>
<dbReference type="SUPFAM" id="SSF46785">
    <property type="entry name" value="Winged helix' DNA-binding domain"/>
    <property type="match status" value="1"/>
</dbReference>
<name>HRCA_CLOAB</name>
<protein>
    <recommendedName>
        <fullName evidence="1">Heat-inducible transcription repressor HrcA</fullName>
    </recommendedName>
</protein>
<keyword id="KW-1185">Reference proteome</keyword>
<keyword id="KW-0678">Repressor</keyword>
<keyword id="KW-0346">Stress response</keyword>
<keyword id="KW-0804">Transcription</keyword>
<keyword id="KW-0805">Transcription regulation</keyword>
<organism>
    <name type="scientific">Clostridium acetobutylicum (strain ATCC 824 / DSM 792 / JCM 1419 / IAM 19013 / LMG 5710 / NBRC 13948 / NRRL B-527 / VKM B-1787 / 2291 / W)</name>
    <dbReference type="NCBI Taxonomy" id="272562"/>
    <lineage>
        <taxon>Bacteria</taxon>
        <taxon>Bacillati</taxon>
        <taxon>Bacillota</taxon>
        <taxon>Clostridia</taxon>
        <taxon>Eubacteriales</taxon>
        <taxon>Clostridiaceae</taxon>
        <taxon>Clostridium</taxon>
    </lineage>
</organism>
<proteinExistence type="evidence at transcript level"/>
<accession>P30727</accession>
<gene>
    <name evidence="1" type="primary">hrcA</name>
    <name type="ordered locus">CA_C1280</name>
</gene>
<reference key="1">
    <citation type="journal article" date="1992" name="J. Bacteriol.">
        <title>Molecular characterization of the dnaK gene region of Clostridium acetobutylicum, including grpE, dnaJ, and a new heat shock gene.</title>
        <authorList>
            <person name="Narberhaus F."/>
            <person name="Giebeler K."/>
            <person name="Bahl H."/>
        </authorList>
    </citation>
    <scope>NUCLEOTIDE SEQUENCE [GENOMIC DNA]</scope>
    <source>
        <strain>ATCC 4259 / DSM 1731 / NCIB 619</strain>
    </source>
</reference>
<reference key="2">
    <citation type="journal article" date="2001" name="J. Bacteriol.">
        <title>Genome sequence and comparative analysis of the solvent-producing bacterium Clostridium acetobutylicum.</title>
        <authorList>
            <person name="Noelling J."/>
            <person name="Breton G."/>
            <person name="Omelchenko M.V."/>
            <person name="Makarova K.S."/>
            <person name="Zeng Q."/>
            <person name="Gibson R."/>
            <person name="Lee H.M."/>
            <person name="Dubois J."/>
            <person name="Qiu D."/>
            <person name="Hitti J."/>
            <person name="Wolf Y.I."/>
            <person name="Tatusov R.L."/>
            <person name="Sabathe F."/>
            <person name="Doucette-Stamm L.A."/>
            <person name="Soucaille P."/>
            <person name="Daly M.J."/>
            <person name="Bennett G.N."/>
            <person name="Koonin E.V."/>
            <person name="Smith D.R."/>
        </authorList>
    </citation>
    <scope>NUCLEOTIDE SEQUENCE [LARGE SCALE GENOMIC DNA]</scope>
    <source>
        <strain>ATCC 824 / DSM 792 / JCM 1419 / IAM 19013 / LMG 5710 / NBRC 13948 / NRRL B-527 / VKM B-1787 / 2291 / W</strain>
    </source>
</reference>